<reference key="1">
    <citation type="journal article" date="2007" name="Appl. Environ. Microbiol.">
        <title>Genome sequence of the cellulolytic gliding bacterium Cytophaga hutchinsonii.</title>
        <authorList>
            <person name="Xie G."/>
            <person name="Bruce D.C."/>
            <person name="Challacombe J.F."/>
            <person name="Chertkov O."/>
            <person name="Detter J.C."/>
            <person name="Gilna P."/>
            <person name="Han C.S."/>
            <person name="Lucas S."/>
            <person name="Misra M."/>
            <person name="Myers G.L."/>
            <person name="Richardson P."/>
            <person name="Tapia R."/>
            <person name="Thayer N."/>
            <person name="Thompson L.S."/>
            <person name="Brettin T.S."/>
            <person name="Henrissat B."/>
            <person name="Wilson D.B."/>
            <person name="McBride M.J."/>
        </authorList>
    </citation>
    <scope>NUCLEOTIDE SEQUENCE [LARGE SCALE GENOMIC DNA]</scope>
    <source>
        <strain>ATCC 33406 / DSM 1761 / JCM 20678 / CIP 103989 / IAM 12607 / NBRC 15051 / NCIMB 9469 / D465</strain>
    </source>
</reference>
<accession>Q11RE2</accession>
<keyword id="KW-0021">Allosteric enzyme</keyword>
<keyword id="KW-0067">ATP-binding</keyword>
<keyword id="KW-0963">Cytoplasm</keyword>
<keyword id="KW-0324">Glycolysis</keyword>
<keyword id="KW-0418">Kinase</keyword>
<keyword id="KW-0460">Magnesium</keyword>
<keyword id="KW-0479">Metal-binding</keyword>
<keyword id="KW-0547">Nucleotide-binding</keyword>
<keyword id="KW-1185">Reference proteome</keyword>
<keyword id="KW-0808">Transferase</keyword>
<proteinExistence type="inferred from homology"/>
<comment type="function">
    <text evidence="1">Catalyzes the phosphorylation of D-fructose 6-phosphate to fructose 1,6-bisphosphate by ATP, the first committing step of glycolysis.</text>
</comment>
<comment type="catalytic activity">
    <reaction evidence="1">
        <text>beta-D-fructose 6-phosphate + ATP = beta-D-fructose 1,6-bisphosphate + ADP + H(+)</text>
        <dbReference type="Rhea" id="RHEA:16109"/>
        <dbReference type="ChEBI" id="CHEBI:15378"/>
        <dbReference type="ChEBI" id="CHEBI:30616"/>
        <dbReference type="ChEBI" id="CHEBI:32966"/>
        <dbReference type="ChEBI" id="CHEBI:57634"/>
        <dbReference type="ChEBI" id="CHEBI:456216"/>
        <dbReference type="EC" id="2.7.1.11"/>
    </reaction>
</comment>
<comment type="cofactor">
    <cofactor evidence="1">
        <name>Mg(2+)</name>
        <dbReference type="ChEBI" id="CHEBI:18420"/>
    </cofactor>
</comment>
<comment type="activity regulation">
    <text evidence="1">Allosterically activated by ADP and other diphosphonucleosides, and allosterically inhibited by phosphoenolpyruvate.</text>
</comment>
<comment type="pathway">
    <text evidence="1">Carbohydrate degradation; glycolysis; D-glyceraldehyde 3-phosphate and glycerone phosphate from D-glucose: step 3/4.</text>
</comment>
<comment type="subunit">
    <text evidence="1">Homotetramer.</text>
</comment>
<comment type="subcellular location">
    <subcellularLocation>
        <location evidence="1">Cytoplasm</location>
    </subcellularLocation>
</comment>
<comment type="similarity">
    <text evidence="1">Belongs to the phosphofructokinase type A (PFKA) family. ATP-dependent PFK group I subfamily. Prokaryotic clade 'B1' sub-subfamily.</text>
</comment>
<dbReference type="EC" id="2.7.1.11" evidence="1"/>
<dbReference type="EMBL" id="CP000383">
    <property type="protein sequence ID" value="ABG60022.1"/>
    <property type="molecule type" value="Genomic_DNA"/>
</dbReference>
<dbReference type="RefSeq" id="WP_011586132.1">
    <property type="nucleotide sequence ID" value="NC_008255.1"/>
</dbReference>
<dbReference type="SMR" id="Q11RE2"/>
<dbReference type="STRING" id="269798.CHU_2773"/>
<dbReference type="KEGG" id="chu:CHU_2773"/>
<dbReference type="eggNOG" id="COG0205">
    <property type="taxonomic scope" value="Bacteria"/>
</dbReference>
<dbReference type="HOGENOM" id="CLU_020655_0_1_10"/>
<dbReference type="OrthoDB" id="9802503at2"/>
<dbReference type="UniPathway" id="UPA00109">
    <property type="reaction ID" value="UER00182"/>
</dbReference>
<dbReference type="Proteomes" id="UP000001822">
    <property type="component" value="Chromosome"/>
</dbReference>
<dbReference type="GO" id="GO:0005945">
    <property type="term" value="C:6-phosphofructokinase complex"/>
    <property type="evidence" value="ECO:0007669"/>
    <property type="project" value="TreeGrafter"/>
</dbReference>
<dbReference type="GO" id="GO:0003872">
    <property type="term" value="F:6-phosphofructokinase activity"/>
    <property type="evidence" value="ECO:0007669"/>
    <property type="project" value="UniProtKB-UniRule"/>
</dbReference>
<dbReference type="GO" id="GO:0016208">
    <property type="term" value="F:AMP binding"/>
    <property type="evidence" value="ECO:0007669"/>
    <property type="project" value="TreeGrafter"/>
</dbReference>
<dbReference type="GO" id="GO:0005524">
    <property type="term" value="F:ATP binding"/>
    <property type="evidence" value="ECO:0007669"/>
    <property type="project" value="UniProtKB-KW"/>
</dbReference>
<dbReference type="GO" id="GO:0070095">
    <property type="term" value="F:fructose-6-phosphate binding"/>
    <property type="evidence" value="ECO:0007669"/>
    <property type="project" value="TreeGrafter"/>
</dbReference>
<dbReference type="GO" id="GO:0042802">
    <property type="term" value="F:identical protein binding"/>
    <property type="evidence" value="ECO:0007669"/>
    <property type="project" value="TreeGrafter"/>
</dbReference>
<dbReference type="GO" id="GO:0046872">
    <property type="term" value="F:metal ion binding"/>
    <property type="evidence" value="ECO:0007669"/>
    <property type="project" value="UniProtKB-KW"/>
</dbReference>
<dbReference type="GO" id="GO:0048029">
    <property type="term" value="F:monosaccharide binding"/>
    <property type="evidence" value="ECO:0007669"/>
    <property type="project" value="TreeGrafter"/>
</dbReference>
<dbReference type="GO" id="GO:0061621">
    <property type="term" value="P:canonical glycolysis"/>
    <property type="evidence" value="ECO:0007669"/>
    <property type="project" value="TreeGrafter"/>
</dbReference>
<dbReference type="GO" id="GO:0030388">
    <property type="term" value="P:fructose 1,6-bisphosphate metabolic process"/>
    <property type="evidence" value="ECO:0007669"/>
    <property type="project" value="TreeGrafter"/>
</dbReference>
<dbReference type="GO" id="GO:0006002">
    <property type="term" value="P:fructose 6-phosphate metabolic process"/>
    <property type="evidence" value="ECO:0007669"/>
    <property type="project" value="InterPro"/>
</dbReference>
<dbReference type="FunFam" id="3.40.50.450:FF:000001">
    <property type="entry name" value="ATP-dependent 6-phosphofructokinase"/>
    <property type="match status" value="1"/>
</dbReference>
<dbReference type="FunFam" id="3.40.50.460:FF:000002">
    <property type="entry name" value="ATP-dependent 6-phosphofructokinase"/>
    <property type="match status" value="1"/>
</dbReference>
<dbReference type="Gene3D" id="3.40.50.450">
    <property type="match status" value="1"/>
</dbReference>
<dbReference type="Gene3D" id="3.40.50.460">
    <property type="entry name" value="Phosphofructokinase domain"/>
    <property type="match status" value="1"/>
</dbReference>
<dbReference type="HAMAP" id="MF_00339">
    <property type="entry name" value="Phosphofructokinase_I_B1"/>
    <property type="match status" value="1"/>
</dbReference>
<dbReference type="InterPro" id="IPR022953">
    <property type="entry name" value="ATP_PFK"/>
</dbReference>
<dbReference type="InterPro" id="IPR012003">
    <property type="entry name" value="ATP_PFK_prok-type"/>
</dbReference>
<dbReference type="InterPro" id="IPR012828">
    <property type="entry name" value="PFKA_ATP_prok"/>
</dbReference>
<dbReference type="InterPro" id="IPR015912">
    <property type="entry name" value="Phosphofructokinase_CS"/>
</dbReference>
<dbReference type="InterPro" id="IPR000023">
    <property type="entry name" value="Phosphofructokinase_dom"/>
</dbReference>
<dbReference type="InterPro" id="IPR035966">
    <property type="entry name" value="PKF_sf"/>
</dbReference>
<dbReference type="NCBIfam" id="TIGR02482">
    <property type="entry name" value="PFKA_ATP"/>
    <property type="match status" value="1"/>
</dbReference>
<dbReference type="NCBIfam" id="NF002872">
    <property type="entry name" value="PRK03202.1"/>
    <property type="match status" value="1"/>
</dbReference>
<dbReference type="PANTHER" id="PTHR13697:SF4">
    <property type="entry name" value="ATP-DEPENDENT 6-PHOSPHOFRUCTOKINASE"/>
    <property type="match status" value="1"/>
</dbReference>
<dbReference type="PANTHER" id="PTHR13697">
    <property type="entry name" value="PHOSPHOFRUCTOKINASE"/>
    <property type="match status" value="1"/>
</dbReference>
<dbReference type="Pfam" id="PF00365">
    <property type="entry name" value="PFK"/>
    <property type="match status" value="1"/>
</dbReference>
<dbReference type="PIRSF" id="PIRSF000532">
    <property type="entry name" value="ATP_PFK_prok"/>
    <property type="match status" value="1"/>
</dbReference>
<dbReference type="PRINTS" id="PR00476">
    <property type="entry name" value="PHFRCTKINASE"/>
</dbReference>
<dbReference type="SUPFAM" id="SSF53784">
    <property type="entry name" value="Phosphofructokinase"/>
    <property type="match status" value="1"/>
</dbReference>
<dbReference type="PROSITE" id="PS00433">
    <property type="entry name" value="PHOSPHOFRUCTOKINASE"/>
    <property type="match status" value="1"/>
</dbReference>
<gene>
    <name evidence="1" type="primary">pfkA</name>
    <name type="ordered locus">CHU_2773</name>
</gene>
<sequence>MKKIAVYTSGGDAPGMNACIRAAVRAGHYHNLEVYGIVRGYDGMINGNFIELDNRAVSNIIQKGGTILKSARSEEFRSPEGRRKAFDQIQKFGIDGLVAIGGNGTFTGAELFYNEYQIPCVGAPGTIDNDLYGSDFTIGYDTAVNTCLAAIDKIRDTADAHERVFFIEVMGRDTGYIAVRSAISGGAEMAIIPEFPYDKNVVINRLKHGTSDTKASHIIIVAEGHQEGRASMIARDIKEALPQLDCRVTTLGHVQRGGGPSAADRVLASRLGLATVEGLLEGRANVMAGIIDHKVVYTPFIDTITKRKPINEDLLSLAEKLNGRSYKV</sequence>
<protein>
    <recommendedName>
        <fullName evidence="1">ATP-dependent 6-phosphofructokinase</fullName>
        <shortName evidence="1">ATP-PFK</shortName>
        <shortName evidence="1">Phosphofructokinase</shortName>
        <ecNumber evidence="1">2.7.1.11</ecNumber>
    </recommendedName>
    <alternativeName>
        <fullName evidence="1">Phosphohexokinase</fullName>
    </alternativeName>
</protein>
<feature type="chain" id="PRO_1000059756" description="ATP-dependent 6-phosphofructokinase">
    <location>
        <begin position="1"/>
        <end position="328"/>
    </location>
</feature>
<feature type="active site" description="Proton acceptor" evidence="1">
    <location>
        <position position="128"/>
    </location>
</feature>
<feature type="binding site" evidence="1">
    <location>
        <position position="11"/>
    </location>
    <ligand>
        <name>ATP</name>
        <dbReference type="ChEBI" id="CHEBI:30616"/>
    </ligand>
</feature>
<feature type="binding site" evidence="1">
    <location>
        <begin position="21"/>
        <end position="25"/>
    </location>
    <ligand>
        <name>ADP</name>
        <dbReference type="ChEBI" id="CHEBI:456216"/>
        <note>allosteric activator; ligand shared between dimeric partners</note>
    </ligand>
</feature>
<feature type="binding site" evidence="1">
    <location>
        <begin position="72"/>
        <end position="73"/>
    </location>
    <ligand>
        <name>ATP</name>
        <dbReference type="ChEBI" id="CHEBI:30616"/>
    </ligand>
</feature>
<feature type="binding site" evidence="1">
    <location>
        <begin position="102"/>
        <end position="105"/>
    </location>
    <ligand>
        <name>ATP</name>
        <dbReference type="ChEBI" id="CHEBI:30616"/>
    </ligand>
</feature>
<feature type="binding site" evidence="1">
    <location>
        <position position="103"/>
    </location>
    <ligand>
        <name>Mg(2+)</name>
        <dbReference type="ChEBI" id="CHEBI:18420"/>
        <note>catalytic</note>
    </ligand>
</feature>
<feature type="binding site" description="in other chain" evidence="1">
    <location>
        <begin position="126"/>
        <end position="128"/>
    </location>
    <ligand>
        <name>substrate</name>
        <note>ligand shared between dimeric partners</note>
    </ligand>
</feature>
<feature type="binding site" description="in other chain" evidence="1">
    <location>
        <position position="155"/>
    </location>
    <ligand>
        <name>ADP</name>
        <dbReference type="ChEBI" id="CHEBI:456216"/>
        <note>allosteric activator; ligand shared between dimeric partners</note>
    </ligand>
</feature>
<feature type="binding site" evidence="1">
    <location>
        <position position="163"/>
    </location>
    <ligand>
        <name>substrate</name>
        <note>ligand shared between dimeric partners</note>
    </ligand>
</feature>
<feature type="binding site" description="in other chain" evidence="1">
    <location>
        <begin position="170"/>
        <end position="172"/>
    </location>
    <ligand>
        <name>substrate</name>
        <note>ligand shared between dimeric partners</note>
    </ligand>
</feature>
<feature type="binding site" description="in other chain" evidence="1">
    <location>
        <begin position="186"/>
        <end position="188"/>
    </location>
    <ligand>
        <name>ADP</name>
        <dbReference type="ChEBI" id="CHEBI:456216"/>
        <note>allosteric activator; ligand shared between dimeric partners</note>
    </ligand>
</feature>
<feature type="binding site" description="in other chain" evidence="1">
    <location>
        <begin position="214"/>
        <end position="216"/>
    </location>
    <ligand>
        <name>ADP</name>
        <dbReference type="ChEBI" id="CHEBI:456216"/>
        <note>allosteric activator; ligand shared between dimeric partners</note>
    </ligand>
</feature>
<feature type="binding site" description="in other chain" evidence="1">
    <location>
        <position position="223"/>
    </location>
    <ligand>
        <name>substrate</name>
        <note>ligand shared between dimeric partners</note>
    </ligand>
</feature>
<feature type="binding site" evidence="1">
    <location>
        <position position="247"/>
    </location>
    <ligand>
        <name>substrate</name>
        <note>ligand shared between dimeric partners</note>
    </ligand>
</feature>
<feature type="binding site" description="in other chain" evidence="1">
    <location>
        <begin position="253"/>
        <end position="256"/>
    </location>
    <ligand>
        <name>substrate</name>
        <note>ligand shared between dimeric partners</note>
    </ligand>
</feature>
<name>PFKA_CYTH3</name>
<evidence type="ECO:0000255" key="1">
    <source>
        <dbReference type="HAMAP-Rule" id="MF_00339"/>
    </source>
</evidence>
<organism>
    <name type="scientific">Cytophaga hutchinsonii (strain ATCC 33406 / DSM 1761 / CIP 103989 / NBRC 15051 / NCIMB 9469 / D465)</name>
    <dbReference type="NCBI Taxonomy" id="269798"/>
    <lineage>
        <taxon>Bacteria</taxon>
        <taxon>Pseudomonadati</taxon>
        <taxon>Bacteroidota</taxon>
        <taxon>Cytophagia</taxon>
        <taxon>Cytophagales</taxon>
        <taxon>Cytophagaceae</taxon>
        <taxon>Cytophaga</taxon>
    </lineage>
</organism>